<organism>
    <name type="scientific">Dictyostelium discoideum</name>
    <name type="common">Social amoeba</name>
    <dbReference type="NCBI Taxonomy" id="44689"/>
    <lineage>
        <taxon>Eukaryota</taxon>
        <taxon>Amoebozoa</taxon>
        <taxon>Evosea</taxon>
        <taxon>Eumycetozoa</taxon>
        <taxon>Dictyostelia</taxon>
        <taxon>Dictyosteliales</taxon>
        <taxon>Dictyosteliaceae</taxon>
        <taxon>Dictyostelium</taxon>
    </lineage>
</organism>
<name>PK2_DICDI</name>
<gene>
    <name type="primary">pkgB</name>
    <name type="synonym">pfkA</name>
    <name type="synonym">pkbr1</name>
    <name type="ORF">DDB_G0290157</name>
</gene>
<evidence type="ECO:0000250" key="1"/>
<evidence type="ECO:0000255" key="2">
    <source>
        <dbReference type="PROSITE-ProRule" id="PRU00159"/>
    </source>
</evidence>
<evidence type="ECO:0000255" key="3">
    <source>
        <dbReference type="PROSITE-ProRule" id="PRU00618"/>
    </source>
</evidence>
<evidence type="ECO:0000255" key="4">
    <source>
        <dbReference type="PROSITE-ProRule" id="PRU10027"/>
    </source>
</evidence>
<evidence type="ECO:0000256" key="5">
    <source>
        <dbReference type="SAM" id="MobiDB-lite"/>
    </source>
</evidence>
<evidence type="ECO:0000269" key="6">
    <source>
    </source>
</evidence>
<evidence type="ECO:0000269" key="7">
    <source>
    </source>
</evidence>
<evidence type="ECO:0000305" key="8"/>
<protein>
    <recommendedName>
        <fullName>Protein kinase 2</fullName>
        <shortName>PK2</shortName>
        <ecNumber>2.7.11.1</ecNumber>
    </recommendedName>
</protein>
<proteinExistence type="evidence at protein level"/>
<keyword id="KW-0067">ATP-binding</keyword>
<keyword id="KW-0114">cAMP</keyword>
<keyword id="KW-1003">Cell membrane</keyword>
<keyword id="KW-0145">Chemotaxis</keyword>
<keyword id="KW-0963">Cytoplasm</keyword>
<keyword id="KW-0418">Kinase</keyword>
<keyword id="KW-0449">Lipoprotein</keyword>
<keyword id="KW-0472">Membrane</keyword>
<keyword id="KW-0519">Myristate</keyword>
<keyword id="KW-0547">Nucleotide-binding</keyword>
<keyword id="KW-0597">Phosphoprotein</keyword>
<keyword id="KW-1185">Reference proteome</keyword>
<keyword id="KW-0723">Serine/threonine-protein kinase</keyword>
<keyword id="KW-0808">Transferase</keyword>
<accession>P28178</accession>
<accession>Q54GH5</accession>
<dbReference type="EC" id="2.7.11.1"/>
<dbReference type="EMBL" id="M59744">
    <property type="protein sequence ID" value="AAA33186.1"/>
    <property type="molecule type" value="mRNA"/>
</dbReference>
<dbReference type="EMBL" id="AAFI02000158">
    <property type="protein sequence ID" value="EAL62350.1"/>
    <property type="molecule type" value="Genomic_DNA"/>
</dbReference>
<dbReference type="PIR" id="A38578">
    <property type="entry name" value="A38578"/>
</dbReference>
<dbReference type="RefSeq" id="XP_635853.1">
    <property type="nucleotide sequence ID" value="XM_630761.1"/>
</dbReference>
<dbReference type="SMR" id="P28178"/>
<dbReference type="FunCoup" id="P28178">
    <property type="interactions" value="199"/>
</dbReference>
<dbReference type="STRING" id="44689.P28178"/>
<dbReference type="GlyGen" id="P28178">
    <property type="glycosylation" value="2 sites"/>
</dbReference>
<dbReference type="iPTMnet" id="P28178"/>
<dbReference type="PaxDb" id="44689-DDB0191365"/>
<dbReference type="EnsemblProtists" id="EAL62350">
    <property type="protein sequence ID" value="EAL62350"/>
    <property type="gene ID" value="DDB_G0290157"/>
</dbReference>
<dbReference type="GeneID" id="8627509"/>
<dbReference type="KEGG" id="ddi:DDB_G0290157"/>
<dbReference type="dictyBase" id="DDB_G0290157">
    <property type="gene designation" value="pkgB"/>
</dbReference>
<dbReference type="VEuPathDB" id="AmoebaDB:DDB_G0290157"/>
<dbReference type="eggNOG" id="KOG0598">
    <property type="taxonomic scope" value="Eukaryota"/>
</dbReference>
<dbReference type="HOGENOM" id="CLU_000288_63_5_1"/>
<dbReference type="InParanoid" id="P28178"/>
<dbReference type="OMA" id="KGSIFAM"/>
<dbReference type="PhylomeDB" id="P28178"/>
<dbReference type="BRENDA" id="2.7.11.1">
    <property type="organism ID" value="1939"/>
</dbReference>
<dbReference type="PRO" id="PR:P28178"/>
<dbReference type="Proteomes" id="UP000002195">
    <property type="component" value="Chromosome 5"/>
</dbReference>
<dbReference type="GO" id="GO:0005737">
    <property type="term" value="C:cytoplasm"/>
    <property type="evidence" value="ECO:0000318"/>
    <property type="project" value="GO_Central"/>
</dbReference>
<dbReference type="GO" id="GO:0005634">
    <property type="term" value="C:nucleus"/>
    <property type="evidence" value="ECO:0000318"/>
    <property type="project" value="GO_Central"/>
</dbReference>
<dbReference type="GO" id="GO:0005886">
    <property type="term" value="C:plasma membrane"/>
    <property type="evidence" value="ECO:0000314"/>
    <property type="project" value="dictyBase"/>
</dbReference>
<dbReference type="GO" id="GO:0005524">
    <property type="term" value="F:ATP binding"/>
    <property type="evidence" value="ECO:0007669"/>
    <property type="project" value="UniProtKB-KW"/>
</dbReference>
<dbReference type="GO" id="GO:0004691">
    <property type="term" value="F:cAMP-dependent protein kinase activity"/>
    <property type="evidence" value="ECO:0000314"/>
    <property type="project" value="dictyBase"/>
</dbReference>
<dbReference type="GO" id="GO:0106310">
    <property type="term" value="F:protein serine kinase activity"/>
    <property type="evidence" value="ECO:0007669"/>
    <property type="project" value="RHEA"/>
</dbReference>
<dbReference type="GO" id="GO:0004674">
    <property type="term" value="F:protein serine/threonine kinase activity"/>
    <property type="evidence" value="ECO:0000318"/>
    <property type="project" value="GO_Central"/>
</dbReference>
<dbReference type="GO" id="GO:0032060">
    <property type="term" value="P:bleb assembly"/>
    <property type="evidence" value="ECO:0000315"/>
    <property type="project" value="dictyBase"/>
</dbReference>
<dbReference type="GO" id="GO:1904630">
    <property type="term" value="P:cellular response to diterpene"/>
    <property type="evidence" value="ECO:0000316"/>
    <property type="project" value="dictyBase"/>
</dbReference>
<dbReference type="GO" id="GO:0043327">
    <property type="term" value="P:chemotaxis to cAMP"/>
    <property type="evidence" value="ECO:0000316"/>
    <property type="project" value="dictyBase"/>
</dbReference>
<dbReference type="GO" id="GO:0046580">
    <property type="term" value="P:negative regulation of Ras protein signal transduction"/>
    <property type="evidence" value="ECO:0000316"/>
    <property type="project" value="dictyBase"/>
</dbReference>
<dbReference type="GO" id="GO:0110094">
    <property type="term" value="P:polyphosphate-mediated signaling"/>
    <property type="evidence" value="ECO:0000316"/>
    <property type="project" value="dictyBase"/>
</dbReference>
<dbReference type="GO" id="GO:1905303">
    <property type="term" value="P:positive regulation of macropinocytosis"/>
    <property type="evidence" value="ECO:0000316"/>
    <property type="project" value="dictyBase"/>
</dbReference>
<dbReference type="GO" id="GO:0006468">
    <property type="term" value="P:protein phosphorylation"/>
    <property type="evidence" value="ECO:0000315"/>
    <property type="project" value="CACAO"/>
</dbReference>
<dbReference type="GO" id="GO:0031269">
    <property type="term" value="P:pseudopodium assembly"/>
    <property type="evidence" value="ECO:0000315"/>
    <property type="project" value="dictyBase"/>
</dbReference>
<dbReference type="GO" id="GO:0030334">
    <property type="term" value="P:regulation of cell migration"/>
    <property type="evidence" value="ECO:0000316"/>
    <property type="project" value="dictyBase"/>
</dbReference>
<dbReference type="GO" id="GO:0050920">
    <property type="term" value="P:regulation of chemotaxis"/>
    <property type="evidence" value="ECO:0000316"/>
    <property type="project" value="dictyBase"/>
</dbReference>
<dbReference type="GO" id="GO:1903013">
    <property type="term" value="P:response to differentiation-inducing factor 1"/>
    <property type="evidence" value="ECO:0007005"/>
    <property type="project" value="dictyBase"/>
</dbReference>
<dbReference type="GO" id="GO:0051602">
    <property type="term" value="P:response to electrical stimulus"/>
    <property type="evidence" value="ECO:0000315"/>
    <property type="project" value="dictyBase"/>
</dbReference>
<dbReference type="GO" id="GO:0030587">
    <property type="term" value="P:sorocarp development"/>
    <property type="evidence" value="ECO:0000315"/>
    <property type="project" value="dictyBase"/>
</dbReference>
<dbReference type="GO" id="GO:0031288">
    <property type="term" value="P:sorocarp morphogenesis"/>
    <property type="evidence" value="ECO:0000315"/>
    <property type="project" value="dictyBase"/>
</dbReference>
<dbReference type="CDD" id="cd05123">
    <property type="entry name" value="STKc_AGC"/>
    <property type="match status" value="1"/>
</dbReference>
<dbReference type="FunFam" id="1.10.510.10:FF:000008">
    <property type="entry name" value="Non-specific serine/threonine protein kinase"/>
    <property type="match status" value="1"/>
</dbReference>
<dbReference type="FunFam" id="3.30.200.20:FF:000048">
    <property type="entry name" value="Non-specific serine/threonine protein kinase"/>
    <property type="match status" value="1"/>
</dbReference>
<dbReference type="Gene3D" id="3.30.200.20">
    <property type="entry name" value="Phosphorylase Kinase, domain 1"/>
    <property type="match status" value="1"/>
</dbReference>
<dbReference type="Gene3D" id="1.10.510.10">
    <property type="entry name" value="Transferase(Phosphotransferase) domain 1"/>
    <property type="match status" value="1"/>
</dbReference>
<dbReference type="InterPro" id="IPR000961">
    <property type="entry name" value="AGC-kinase_C"/>
</dbReference>
<dbReference type="InterPro" id="IPR011009">
    <property type="entry name" value="Kinase-like_dom_sf"/>
</dbReference>
<dbReference type="InterPro" id="IPR017892">
    <property type="entry name" value="Pkinase_C"/>
</dbReference>
<dbReference type="InterPro" id="IPR000719">
    <property type="entry name" value="Prot_kinase_dom"/>
</dbReference>
<dbReference type="InterPro" id="IPR017441">
    <property type="entry name" value="Protein_kinase_ATP_BS"/>
</dbReference>
<dbReference type="InterPro" id="IPR008271">
    <property type="entry name" value="Ser/Thr_kinase_AS"/>
</dbReference>
<dbReference type="InterPro" id="IPR045270">
    <property type="entry name" value="STKc_AGC"/>
</dbReference>
<dbReference type="PANTHER" id="PTHR24351">
    <property type="entry name" value="RIBOSOMAL PROTEIN S6 KINASE"/>
    <property type="match status" value="1"/>
</dbReference>
<dbReference type="Pfam" id="PF00069">
    <property type="entry name" value="Pkinase"/>
    <property type="match status" value="1"/>
</dbReference>
<dbReference type="Pfam" id="PF00433">
    <property type="entry name" value="Pkinase_C"/>
    <property type="match status" value="1"/>
</dbReference>
<dbReference type="SMART" id="SM00133">
    <property type="entry name" value="S_TK_X"/>
    <property type="match status" value="1"/>
</dbReference>
<dbReference type="SMART" id="SM00220">
    <property type="entry name" value="S_TKc"/>
    <property type="match status" value="1"/>
</dbReference>
<dbReference type="SUPFAM" id="SSF56112">
    <property type="entry name" value="Protein kinase-like (PK-like)"/>
    <property type="match status" value="1"/>
</dbReference>
<dbReference type="PROSITE" id="PS51285">
    <property type="entry name" value="AGC_KINASE_CTER"/>
    <property type="match status" value="1"/>
</dbReference>
<dbReference type="PROSITE" id="PS00107">
    <property type="entry name" value="PROTEIN_KINASE_ATP"/>
    <property type="match status" value="1"/>
</dbReference>
<dbReference type="PROSITE" id="PS50011">
    <property type="entry name" value="PROTEIN_KINASE_DOM"/>
    <property type="match status" value="1"/>
</dbReference>
<dbReference type="PROSITE" id="PS00108">
    <property type="entry name" value="PROTEIN_KINASE_ST"/>
    <property type="match status" value="1"/>
</dbReference>
<feature type="chain" id="PRO_0000086546" description="Protein kinase 2">
    <location>
        <begin position="1"/>
        <end position="479"/>
    </location>
</feature>
<feature type="domain" description="Protein kinase" evidence="2">
    <location>
        <begin position="153"/>
        <end position="407"/>
    </location>
</feature>
<feature type="domain" description="AGC-kinase C-terminal" evidence="3">
    <location>
        <begin position="408"/>
        <end position="479"/>
    </location>
</feature>
<feature type="region of interest" description="Disordered" evidence="5">
    <location>
        <begin position="1"/>
        <end position="136"/>
    </location>
</feature>
<feature type="compositionally biased region" description="Low complexity" evidence="5">
    <location>
        <begin position="52"/>
        <end position="65"/>
    </location>
</feature>
<feature type="compositionally biased region" description="Low complexity" evidence="5">
    <location>
        <begin position="79"/>
        <end position="96"/>
    </location>
</feature>
<feature type="compositionally biased region" description="Polar residues" evidence="5">
    <location>
        <begin position="102"/>
        <end position="115"/>
    </location>
</feature>
<feature type="active site" description="Proton acceptor" evidence="2 4">
    <location>
        <position position="276"/>
    </location>
</feature>
<feature type="binding site" evidence="2">
    <location>
        <begin position="159"/>
        <end position="167"/>
    </location>
    <ligand>
        <name>ATP</name>
        <dbReference type="ChEBI" id="CHEBI:30616"/>
    </ligand>
</feature>
<feature type="binding site" evidence="2">
    <location>
        <position position="182"/>
    </location>
    <ligand>
        <name>ATP</name>
        <dbReference type="ChEBI" id="CHEBI:30616"/>
    </ligand>
</feature>
<feature type="modified residue" description="Phosphothreonine; by autocatalysis" evidence="1">
    <location>
        <position position="309"/>
    </location>
</feature>
<feature type="modified residue" description="Phosphothreonine" evidence="7">
    <location>
        <position position="470"/>
    </location>
</feature>
<feature type="mutagenesis site" description="Loss of activity; when associated with A-470." evidence="6">
    <original>T</original>
    <variation>A</variation>
    <location>
        <position position="309"/>
    </location>
</feature>
<feature type="mutagenesis site" description="Loss of activity; when associated with A-309." evidence="6">
    <original>T</original>
    <variation>A</variation>
    <location>
        <position position="470"/>
    </location>
</feature>
<feature type="sequence conflict" description="In Ref. 1; AAA33186." evidence="8" ref="1">
    <original>T</original>
    <variation>A</variation>
    <location>
        <position position="62"/>
    </location>
</feature>
<comment type="function">
    <text evidence="6 7">Required for morphogenesis during multicellular development. Phosphorylates talB, gefN, gefS, PI4P 5-kinase and gacQ.</text>
</comment>
<comment type="catalytic activity">
    <reaction>
        <text>L-seryl-[protein] + ATP = O-phospho-L-seryl-[protein] + ADP + H(+)</text>
        <dbReference type="Rhea" id="RHEA:17989"/>
        <dbReference type="Rhea" id="RHEA-COMP:9863"/>
        <dbReference type="Rhea" id="RHEA-COMP:11604"/>
        <dbReference type="ChEBI" id="CHEBI:15378"/>
        <dbReference type="ChEBI" id="CHEBI:29999"/>
        <dbReference type="ChEBI" id="CHEBI:30616"/>
        <dbReference type="ChEBI" id="CHEBI:83421"/>
        <dbReference type="ChEBI" id="CHEBI:456216"/>
        <dbReference type="EC" id="2.7.11.1"/>
    </reaction>
</comment>
<comment type="catalytic activity">
    <reaction>
        <text>L-threonyl-[protein] + ATP = O-phospho-L-threonyl-[protein] + ADP + H(+)</text>
        <dbReference type="Rhea" id="RHEA:46608"/>
        <dbReference type="Rhea" id="RHEA-COMP:11060"/>
        <dbReference type="Rhea" id="RHEA-COMP:11605"/>
        <dbReference type="ChEBI" id="CHEBI:15378"/>
        <dbReference type="ChEBI" id="CHEBI:30013"/>
        <dbReference type="ChEBI" id="CHEBI:30616"/>
        <dbReference type="ChEBI" id="CHEBI:61977"/>
        <dbReference type="ChEBI" id="CHEBI:456216"/>
        <dbReference type="EC" id="2.7.11.1"/>
    </reaction>
</comment>
<comment type="subcellular location">
    <subcellularLocation>
        <location>Cytoplasm</location>
    </subcellularLocation>
    <subcellularLocation>
        <location>Cell membrane</location>
        <topology>Lipid-anchor</topology>
        <orientation>Cytoplasmic side</orientation>
    </subcellularLocation>
    <text>Persistently localized on the cell membrane.</text>
</comment>
<comment type="developmental stage">
    <text evidence="6">Levels increase upon the initiation of development and are maximal during aggregation, decrease 2-3-fold and remain constant throughout the slug stage. A switch from ubiquitous expression in all cells during growth and aggregation in early development to expression restricted to cells found at the top of the mound during tip formation is observed (at protein levels). Encodes a 2.0 kb and a 2.2 kb transcript. The smaller one is expressed, at low levels, in vegetative cells, and the larger one during development. Ubiquitously found in early development and then restricted to the apical cells in developing aggregates.</text>
</comment>
<comment type="induction">
    <text>The 2.2 kb transcript is probably induced by exogenous cAMP via a cell-surface receptor-mediated signal transduction pathway. The smaller transcript is induced by starvation at the onset of development, with transcript levels peaking at 4-8 hours during the aggregation stage. By 8 hours of development, the larger transcript is induced and peaks at the mound stage (12 hours).</text>
</comment>
<comment type="PTM">
    <text>Seems to be myristoylated.</text>
</comment>
<comment type="disruption phenotype">
    <text evidence="6 7">pkgB null cells arrest development at the mound stage, have chemotaxis defects and are defective in morphogenesis and multicellular development. Some mounds are able to round up and become almost spherical. Some of the mounds form an aberrant sorus atop an irregular stalk-like structure without proceeding through the normal intermediate stage and without stalk tube. pkbA-/pkgB-cells exhibit growth defects and show stronger chemotaxis and cell-polarity defects than pkbA- cells. They also move slowly and do not aggregate at lower cell densities at which parental strain aggregate normally.</text>
</comment>
<comment type="similarity">
    <text evidence="8">Belongs to the protein kinase superfamily. AGC Ser/Thr protein kinase family. S6 kinase subfamily.</text>
</comment>
<sequence length="479" mass="52994">MGKGQSKIKNGGSGKPAKAGKPKKGNKNDETTPTSTPTPTPTPTQQNLDNSAQQQQQQQQTTTAAVSLDNKEQQQQQNIPAPATQTPITQTGTPTIEESQKNTDNNNINGASNEASSSPDSPNGSGNGNDDEDEGPEEVIFSKNKQSATKDDFELLNVIGKGSFGKVMQVKKKGEDKIFAMKVLRKDAIIARKQVNHTKSEKTILQCISHPFIVNLHYAFQTKDKLYMVLDFVNGGELFFHLKREGRFSEPRVKIYAAEIVSALDHLHKQDIVYRDLKPENILLDSEGHICITDFGLSKKIETTDGTFTFCGTPEYLAPEVLNGHGHGCAVDWWSLGTLLYEMLTGLPPFYSQNVSTMYQKILNGELKIPTYISPEAKSLLEGLLTREVDKRLGTKGGGEVKQHPWFKNIDWEKLDRKEVEVHFKPKVKSGTDISQIDPVFTQERPMDSLVETSALGDAMGKDTSFEGFTYVADSILKD</sequence>
<reference key="1">
    <citation type="journal article" date="1991" name="Proc. Natl. Acad. Sci. U.S.A.">
        <title>Identification of a protein kinase multigene family of Dictyostelium discoideum: molecular cloning and expression of a cDNA encoding a developmentally regulated protein kinase.</title>
        <authorList>
            <person name="Haribabu B."/>
            <person name="Dottin R.P."/>
        </authorList>
    </citation>
    <scope>NUCLEOTIDE SEQUENCE [MRNA]</scope>
</reference>
<reference key="2">
    <citation type="journal article" date="2005" name="Nature">
        <title>The genome of the social amoeba Dictyostelium discoideum.</title>
        <authorList>
            <person name="Eichinger L."/>
            <person name="Pachebat J.A."/>
            <person name="Gloeckner G."/>
            <person name="Rajandream M.A."/>
            <person name="Sucgang R."/>
            <person name="Berriman M."/>
            <person name="Song J."/>
            <person name="Olsen R."/>
            <person name="Szafranski K."/>
            <person name="Xu Q."/>
            <person name="Tunggal B."/>
            <person name="Kummerfeld S."/>
            <person name="Madera M."/>
            <person name="Konfortov B.A."/>
            <person name="Rivero F."/>
            <person name="Bankier A.T."/>
            <person name="Lehmann R."/>
            <person name="Hamlin N."/>
            <person name="Davies R."/>
            <person name="Gaudet P."/>
            <person name="Fey P."/>
            <person name="Pilcher K."/>
            <person name="Chen G."/>
            <person name="Saunders D."/>
            <person name="Sodergren E.J."/>
            <person name="Davis P."/>
            <person name="Kerhornou A."/>
            <person name="Nie X."/>
            <person name="Hall N."/>
            <person name="Anjard C."/>
            <person name="Hemphill L."/>
            <person name="Bason N."/>
            <person name="Farbrother P."/>
            <person name="Desany B."/>
            <person name="Just E."/>
            <person name="Morio T."/>
            <person name="Rost R."/>
            <person name="Churcher C.M."/>
            <person name="Cooper J."/>
            <person name="Haydock S."/>
            <person name="van Driessche N."/>
            <person name="Cronin A."/>
            <person name="Goodhead I."/>
            <person name="Muzny D.M."/>
            <person name="Mourier T."/>
            <person name="Pain A."/>
            <person name="Lu M."/>
            <person name="Harper D."/>
            <person name="Lindsay R."/>
            <person name="Hauser H."/>
            <person name="James K.D."/>
            <person name="Quiles M."/>
            <person name="Madan Babu M."/>
            <person name="Saito T."/>
            <person name="Buchrieser C."/>
            <person name="Wardroper A."/>
            <person name="Felder M."/>
            <person name="Thangavelu M."/>
            <person name="Johnson D."/>
            <person name="Knights A."/>
            <person name="Loulseged H."/>
            <person name="Mungall K.L."/>
            <person name="Oliver K."/>
            <person name="Price C."/>
            <person name="Quail M.A."/>
            <person name="Urushihara H."/>
            <person name="Hernandez J."/>
            <person name="Rabbinowitsch E."/>
            <person name="Steffen D."/>
            <person name="Sanders M."/>
            <person name="Ma J."/>
            <person name="Kohara Y."/>
            <person name="Sharp S."/>
            <person name="Simmonds M.N."/>
            <person name="Spiegler S."/>
            <person name="Tivey A."/>
            <person name="Sugano S."/>
            <person name="White B."/>
            <person name="Walker D."/>
            <person name="Woodward J.R."/>
            <person name="Winckler T."/>
            <person name="Tanaka Y."/>
            <person name="Shaulsky G."/>
            <person name="Schleicher M."/>
            <person name="Weinstock G.M."/>
            <person name="Rosenthal A."/>
            <person name="Cox E.C."/>
            <person name="Chisholm R.L."/>
            <person name="Gibbs R.A."/>
            <person name="Loomis W.F."/>
            <person name="Platzer M."/>
            <person name="Kay R.R."/>
            <person name="Williams J.G."/>
            <person name="Dear P.H."/>
            <person name="Noegel A.A."/>
            <person name="Barrell B.G."/>
            <person name="Kuspa A."/>
        </authorList>
    </citation>
    <scope>NUCLEOTIDE SEQUENCE [LARGE SCALE GENOMIC DNA]</scope>
    <source>
        <strain>AX4</strain>
    </source>
</reference>
<reference key="3">
    <citation type="journal article" date="2000" name="Curr. Biol.">
        <title>A novel Akt/PKB-related kinase is essential for morphogenesis in Dictyostelium.</title>
        <authorList>
            <person name="Meili R."/>
            <person name="Ellsworth C."/>
            <person name="Firtel R.A."/>
        </authorList>
    </citation>
    <scope>SUBCELLULAR LOCATION</scope>
    <scope>DEVELOPMENTAL STAGE</scope>
    <scope>DISRUPTION PHENOTYPE</scope>
    <scope>FUNCTION</scope>
    <scope>MUTAGENESIS OF THR-309 AND THR-470</scope>
</reference>
<reference key="4">
    <citation type="journal article" date="2008" name="Curr. Biol.">
        <title>PIP3-independent activation of TorC2 and PKB at the cell's leading edge mediates chemotaxis.</title>
        <authorList>
            <person name="Kamimura Y."/>
            <person name="Xiong Y."/>
            <person name="Iglesias P.A."/>
            <person name="Hoeller O."/>
            <person name="Bolourani P."/>
            <person name="Devreotes P.N."/>
        </authorList>
    </citation>
    <scope>SUBCELLULAR LOCATION</scope>
    <scope>DISRUPTION PHENOTYPE</scope>
    <scope>PHOSPHORYLATION AT THR-309 AND THR-470</scope>
    <scope>FUNCTION</scope>
</reference>